<reference key="1">
    <citation type="journal article" date="2005" name="Proc. Natl. Acad. Sci. U.S.A.">
        <title>Complete genome sequence of Vibrio fischeri: a symbiotic bacterium with pathogenic congeners.</title>
        <authorList>
            <person name="Ruby E.G."/>
            <person name="Urbanowski M."/>
            <person name="Campbell J."/>
            <person name="Dunn A."/>
            <person name="Faini M."/>
            <person name="Gunsalus R."/>
            <person name="Lostroh P."/>
            <person name="Lupp C."/>
            <person name="McCann J."/>
            <person name="Millikan D."/>
            <person name="Schaefer A."/>
            <person name="Stabb E."/>
            <person name="Stevens A."/>
            <person name="Visick K."/>
            <person name="Whistler C."/>
            <person name="Greenberg E.P."/>
        </authorList>
    </citation>
    <scope>NUCLEOTIDE SEQUENCE [LARGE SCALE GENOMIC DNA]</scope>
    <source>
        <strain>ATCC 700601 / ES114</strain>
    </source>
</reference>
<evidence type="ECO:0000255" key="1">
    <source>
        <dbReference type="HAMAP-Rule" id="MF_00451"/>
    </source>
</evidence>
<sequence length="144" mass="16222">MTIERTFSIVKPDAVKRNLIGAIYRRIEKTGMQIVAAKMLRLTKEQAEGFYAEHEGKEFFDELVAYMMSGPVMVQVLEGENAVVRYRELMGKTNPEEAACGSLRADYAISMRYNSVHGADSPESAAREIAYFFAEDEICPRPAE</sequence>
<feature type="chain" id="PRO_0000137071" description="Nucleoside diphosphate kinase">
    <location>
        <begin position="1"/>
        <end position="144"/>
    </location>
</feature>
<feature type="active site" description="Pros-phosphohistidine intermediate" evidence="1">
    <location>
        <position position="117"/>
    </location>
</feature>
<feature type="binding site" evidence="1">
    <location>
        <position position="11"/>
    </location>
    <ligand>
        <name>ATP</name>
        <dbReference type="ChEBI" id="CHEBI:30616"/>
    </ligand>
</feature>
<feature type="binding site" evidence="1">
    <location>
        <position position="59"/>
    </location>
    <ligand>
        <name>ATP</name>
        <dbReference type="ChEBI" id="CHEBI:30616"/>
    </ligand>
</feature>
<feature type="binding site" evidence="1">
    <location>
        <position position="87"/>
    </location>
    <ligand>
        <name>ATP</name>
        <dbReference type="ChEBI" id="CHEBI:30616"/>
    </ligand>
</feature>
<feature type="binding site" evidence="1">
    <location>
        <position position="93"/>
    </location>
    <ligand>
        <name>ATP</name>
        <dbReference type="ChEBI" id="CHEBI:30616"/>
    </ligand>
</feature>
<feature type="binding site" evidence="1">
    <location>
        <position position="104"/>
    </location>
    <ligand>
        <name>ATP</name>
        <dbReference type="ChEBI" id="CHEBI:30616"/>
    </ligand>
</feature>
<feature type="binding site" evidence="1">
    <location>
        <position position="114"/>
    </location>
    <ligand>
        <name>ATP</name>
        <dbReference type="ChEBI" id="CHEBI:30616"/>
    </ligand>
</feature>
<accession>Q5E776</accession>
<gene>
    <name evidence="1" type="primary">ndk</name>
    <name type="ordered locus">VF_0625</name>
</gene>
<organism>
    <name type="scientific">Aliivibrio fischeri (strain ATCC 700601 / ES114)</name>
    <name type="common">Vibrio fischeri</name>
    <dbReference type="NCBI Taxonomy" id="312309"/>
    <lineage>
        <taxon>Bacteria</taxon>
        <taxon>Pseudomonadati</taxon>
        <taxon>Pseudomonadota</taxon>
        <taxon>Gammaproteobacteria</taxon>
        <taxon>Vibrionales</taxon>
        <taxon>Vibrionaceae</taxon>
        <taxon>Aliivibrio</taxon>
    </lineage>
</organism>
<keyword id="KW-0067">ATP-binding</keyword>
<keyword id="KW-0963">Cytoplasm</keyword>
<keyword id="KW-0418">Kinase</keyword>
<keyword id="KW-0460">Magnesium</keyword>
<keyword id="KW-0479">Metal-binding</keyword>
<keyword id="KW-0546">Nucleotide metabolism</keyword>
<keyword id="KW-0547">Nucleotide-binding</keyword>
<keyword id="KW-0597">Phosphoprotein</keyword>
<keyword id="KW-1185">Reference proteome</keyword>
<keyword id="KW-0808">Transferase</keyword>
<proteinExistence type="inferred from homology"/>
<protein>
    <recommendedName>
        <fullName evidence="1">Nucleoside diphosphate kinase</fullName>
        <shortName evidence="1">NDK</shortName>
        <shortName evidence="1">NDP kinase</shortName>
        <ecNumber evidence="1">2.7.4.6</ecNumber>
    </recommendedName>
    <alternativeName>
        <fullName evidence="1">Nucleoside-2-P kinase</fullName>
    </alternativeName>
</protein>
<name>NDK_ALIF1</name>
<dbReference type="EC" id="2.7.4.6" evidence="1"/>
<dbReference type="EMBL" id="CP000020">
    <property type="protein sequence ID" value="AAW85120.1"/>
    <property type="molecule type" value="Genomic_DNA"/>
</dbReference>
<dbReference type="RefSeq" id="WP_005417926.1">
    <property type="nucleotide sequence ID" value="NC_006840.2"/>
</dbReference>
<dbReference type="RefSeq" id="YP_204008.1">
    <property type="nucleotide sequence ID" value="NC_006840.2"/>
</dbReference>
<dbReference type="SMR" id="Q5E776"/>
<dbReference type="STRING" id="312309.VF_0625"/>
<dbReference type="EnsemblBacteria" id="AAW85120">
    <property type="protein sequence ID" value="AAW85120"/>
    <property type="gene ID" value="VF_0625"/>
</dbReference>
<dbReference type="GeneID" id="54163278"/>
<dbReference type="KEGG" id="vfi:VF_0625"/>
<dbReference type="PATRIC" id="fig|312309.11.peg.617"/>
<dbReference type="eggNOG" id="COG0105">
    <property type="taxonomic scope" value="Bacteria"/>
</dbReference>
<dbReference type="HOGENOM" id="CLU_060216_8_1_6"/>
<dbReference type="OrthoDB" id="9801161at2"/>
<dbReference type="Proteomes" id="UP000000537">
    <property type="component" value="Chromosome I"/>
</dbReference>
<dbReference type="GO" id="GO:0005737">
    <property type="term" value="C:cytoplasm"/>
    <property type="evidence" value="ECO:0007669"/>
    <property type="project" value="UniProtKB-SubCell"/>
</dbReference>
<dbReference type="GO" id="GO:0005524">
    <property type="term" value="F:ATP binding"/>
    <property type="evidence" value="ECO:0007669"/>
    <property type="project" value="UniProtKB-UniRule"/>
</dbReference>
<dbReference type="GO" id="GO:0046872">
    <property type="term" value="F:metal ion binding"/>
    <property type="evidence" value="ECO:0007669"/>
    <property type="project" value="UniProtKB-KW"/>
</dbReference>
<dbReference type="GO" id="GO:0004550">
    <property type="term" value="F:nucleoside diphosphate kinase activity"/>
    <property type="evidence" value="ECO:0007669"/>
    <property type="project" value="UniProtKB-UniRule"/>
</dbReference>
<dbReference type="GO" id="GO:0006241">
    <property type="term" value="P:CTP biosynthetic process"/>
    <property type="evidence" value="ECO:0007669"/>
    <property type="project" value="UniProtKB-UniRule"/>
</dbReference>
<dbReference type="GO" id="GO:0006183">
    <property type="term" value="P:GTP biosynthetic process"/>
    <property type="evidence" value="ECO:0007669"/>
    <property type="project" value="UniProtKB-UniRule"/>
</dbReference>
<dbReference type="GO" id="GO:0006228">
    <property type="term" value="P:UTP biosynthetic process"/>
    <property type="evidence" value="ECO:0007669"/>
    <property type="project" value="UniProtKB-UniRule"/>
</dbReference>
<dbReference type="CDD" id="cd04413">
    <property type="entry name" value="NDPk_I"/>
    <property type="match status" value="1"/>
</dbReference>
<dbReference type="FunFam" id="3.30.70.141:FF:000001">
    <property type="entry name" value="Nucleoside diphosphate kinase"/>
    <property type="match status" value="1"/>
</dbReference>
<dbReference type="Gene3D" id="3.30.70.141">
    <property type="entry name" value="Nucleoside diphosphate kinase-like domain"/>
    <property type="match status" value="1"/>
</dbReference>
<dbReference type="HAMAP" id="MF_00451">
    <property type="entry name" value="NDP_kinase"/>
    <property type="match status" value="1"/>
</dbReference>
<dbReference type="InterPro" id="IPR034907">
    <property type="entry name" value="NDK-like_dom"/>
</dbReference>
<dbReference type="InterPro" id="IPR036850">
    <property type="entry name" value="NDK-like_dom_sf"/>
</dbReference>
<dbReference type="InterPro" id="IPR001564">
    <property type="entry name" value="Nucleoside_diP_kinase"/>
</dbReference>
<dbReference type="NCBIfam" id="NF001908">
    <property type="entry name" value="PRK00668.1"/>
    <property type="match status" value="1"/>
</dbReference>
<dbReference type="PANTHER" id="PTHR46161">
    <property type="entry name" value="NUCLEOSIDE DIPHOSPHATE KINASE"/>
    <property type="match status" value="1"/>
</dbReference>
<dbReference type="PANTHER" id="PTHR46161:SF3">
    <property type="entry name" value="NUCLEOSIDE DIPHOSPHATE KINASE DDB_G0292928-RELATED"/>
    <property type="match status" value="1"/>
</dbReference>
<dbReference type="Pfam" id="PF00334">
    <property type="entry name" value="NDK"/>
    <property type="match status" value="1"/>
</dbReference>
<dbReference type="PRINTS" id="PR01243">
    <property type="entry name" value="NUCDPKINASE"/>
</dbReference>
<dbReference type="SMART" id="SM00562">
    <property type="entry name" value="NDK"/>
    <property type="match status" value="1"/>
</dbReference>
<dbReference type="SUPFAM" id="SSF54919">
    <property type="entry name" value="Nucleoside diphosphate kinase, NDK"/>
    <property type="match status" value="1"/>
</dbReference>
<dbReference type="PROSITE" id="PS51374">
    <property type="entry name" value="NDPK_LIKE"/>
    <property type="match status" value="1"/>
</dbReference>
<comment type="function">
    <text evidence="1">Major role in the synthesis of nucleoside triphosphates other than ATP. The ATP gamma phosphate is transferred to the NDP beta phosphate via a ping-pong mechanism, using a phosphorylated active-site intermediate.</text>
</comment>
<comment type="catalytic activity">
    <reaction evidence="1">
        <text>a 2'-deoxyribonucleoside 5'-diphosphate + ATP = a 2'-deoxyribonucleoside 5'-triphosphate + ADP</text>
        <dbReference type="Rhea" id="RHEA:44640"/>
        <dbReference type="ChEBI" id="CHEBI:30616"/>
        <dbReference type="ChEBI" id="CHEBI:61560"/>
        <dbReference type="ChEBI" id="CHEBI:73316"/>
        <dbReference type="ChEBI" id="CHEBI:456216"/>
        <dbReference type="EC" id="2.7.4.6"/>
    </reaction>
</comment>
<comment type="catalytic activity">
    <reaction evidence="1">
        <text>a ribonucleoside 5'-diphosphate + ATP = a ribonucleoside 5'-triphosphate + ADP</text>
        <dbReference type="Rhea" id="RHEA:18113"/>
        <dbReference type="ChEBI" id="CHEBI:30616"/>
        <dbReference type="ChEBI" id="CHEBI:57930"/>
        <dbReference type="ChEBI" id="CHEBI:61557"/>
        <dbReference type="ChEBI" id="CHEBI:456216"/>
        <dbReference type="EC" id="2.7.4.6"/>
    </reaction>
</comment>
<comment type="cofactor">
    <cofactor evidence="1">
        <name>Mg(2+)</name>
        <dbReference type="ChEBI" id="CHEBI:18420"/>
    </cofactor>
</comment>
<comment type="subunit">
    <text evidence="1">Homotetramer.</text>
</comment>
<comment type="subcellular location">
    <subcellularLocation>
        <location evidence="1">Cytoplasm</location>
    </subcellularLocation>
</comment>
<comment type="similarity">
    <text evidence="1">Belongs to the NDK family.</text>
</comment>